<reference key="1">
    <citation type="journal article" date="1987" name="Virology">
        <title>Genetic divergence of the NS genes of avian influenza viruses.</title>
        <authorList>
            <person name="Nakajima K."/>
            <person name="Nobusawa E."/>
            <person name="Ogawa T."/>
            <person name="Nakajima S."/>
        </authorList>
    </citation>
    <scope>NUCLEOTIDE SEQUENCE [GENOMIC RNA]</scope>
</reference>
<reference key="2">
    <citation type="journal article" date="2003" name="Virology">
        <title>Intracellular warfare between human influenza viruses and human cells: the roles of the viral NS1 protein.</title>
        <authorList>
            <person name="Krug R.M."/>
            <person name="Yuan W."/>
            <person name="Noah D.L."/>
            <person name="Latham A.G."/>
        </authorList>
    </citation>
    <scope>REVIEW</scope>
</reference>
<evidence type="ECO:0000255" key="1">
    <source>
        <dbReference type="HAMAP-Rule" id="MF_04066"/>
    </source>
</evidence>
<evidence type="ECO:0000256" key="2">
    <source>
        <dbReference type="SAM" id="MobiDB-lite"/>
    </source>
</evidence>
<keyword id="KW-0025">Alternative splicing</keyword>
<keyword id="KW-1262">Eukaryotic host gene expression shutoff by virus</keyword>
<keyword id="KW-1035">Host cytoplasm</keyword>
<keyword id="KW-1190">Host gene expression shutoff by virus</keyword>
<keyword id="KW-1192">Host mRNA suppression by virus</keyword>
<keyword id="KW-1048">Host nucleus</keyword>
<keyword id="KW-0945">Host-virus interaction</keyword>
<keyword id="KW-1090">Inhibition of host innate immune response by virus</keyword>
<keyword id="KW-1114">Inhibition of host interferon signaling pathway by virus</keyword>
<keyword id="KW-1102">Inhibition of host PKR by virus</keyword>
<keyword id="KW-1103">Inhibition of host pre-mRNA processing by virus</keyword>
<keyword id="KW-1088">Inhibition of host RIG-I by virus</keyword>
<keyword id="KW-1113">Inhibition of host RLR pathway by virus</keyword>
<keyword id="KW-0922">Interferon antiviral system evasion</keyword>
<keyword id="KW-0694">RNA-binding</keyword>
<keyword id="KW-0832">Ubl conjugation</keyword>
<keyword id="KW-0899">Viral immunoevasion</keyword>
<gene>
    <name evidence="1" type="primary">NS</name>
</gene>
<protein>
    <recommendedName>
        <fullName evidence="1">Non-structural protein 1</fullName>
        <shortName evidence="1">NS1</shortName>
    </recommendedName>
    <alternativeName>
        <fullName evidence="1">NS1A</fullName>
    </alternativeName>
</protein>
<sequence length="227" mass="25715">NTVSSFQVDCFLWHVRKRFADLELGDAPFLDRLCRDQKSLRGRSSTLGLDIETATRAGKQIVERILEEESDETLKMTIASAPAFRYPTDMTLEEMSRDWFMLMPKQKVAGSLCIRMDQAIMDKNIILKANFSVIFDRLETLILLRAFTEEGAIVGEISPLPSLPGHTNEDVKNAIGDLIGGLEWNDNTVRVSETLQRFAWRSSNEGGRPPLPPKQKRKMARTIESEV</sequence>
<accession>P08274</accession>
<feature type="chain" id="PRO_0000078923" description="Non-structural protein 1">
    <location>
        <begin position="1" status="less than"/>
        <end position="227"/>
    </location>
</feature>
<feature type="region of interest" description="CPSF4-binding" evidence="1">
    <location>
        <begin position="177"/>
        <end position="212"/>
    </location>
</feature>
<feature type="region of interest" description="Disordered" evidence="2">
    <location>
        <begin position="202"/>
        <end position="227"/>
    </location>
</feature>
<feature type="region of interest" description="PABPN1-binding" evidence="1">
    <location>
        <begin position="220"/>
        <end position="227"/>
    </location>
</feature>
<feature type="short sequence motif" description="Nuclear localization signal" evidence="1">
    <location>
        <begin position="31"/>
        <end position="35"/>
    </location>
</feature>
<feature type="short sequence motif" description="Nuclear export signal" evidence="1">
    <location>
        <begin position="134"/>
        <end position="143"/>
    </location>
</feature>
<feature type="non-terminal residue">
    <location>
        <position position="1"/>
    </location>
</feature>
<organism>
    <name type="scientific">Influenza A virus (strain A/Chicken/Japan/1924 H7N7)</name>
    <dbReference type="NCBI Taxonomy" id="11340"/>
    <lineage>
        <taxon>Viruses</taxon>
        <taxon>Riboviria</taxon>
        <taxon>Orthornavirae</taxon>
        <taxon>Negarnaviricota</taxon>
        <taxon>Polyploviricotina</taxon>
        <taxon>Insthoviricetes</taxon>
        <taxon>Articulavirales</taxon>
        <taxon>Orthomyxoviridae</taxon>
        <taxon>Alphainfluenzavirus</taxon>
        <taxon>Alphainfluenzavirus influenzae</taxon>
        <taxon>Influenza A virus</taxon>
    </lineage>
</organism>
<comment type="function">
    <text evidence="1">Inhibits post-transcriptional processing of cellular pre-mRNA, by binding and inhibiting two cellular proteins that are required for the 3'-end processing of cellular pre-mRNAs: the 30 kDa cleavage and polyadenylation specificity factor/CPSF4 and the poly(A)-binding protein 2/PABPN1. In turn, unprocessed 3' end pre-mRNAs accumulate in the host nucleus and are no longer exported to the cytoplasm. Cellular protein synthesis is thereby shut off very early after virus infection. Viral protein synthesis is not affected by the inhibition of the cellular 3' end processing machinery because the poly(A) tails of viral mRNAs are produced by the viral polymerase through a stuttering mechanism. Prevents the establishment of the cellular antiviral state by inhibiting TRIM25-mediated RIGI ubiquitination, which normally triggers the antiviral transduction signal that leads to the activation of type I IFN genes by transcription factors IRF3 and IRF7. Also binds poly(A) and U6 snRNA. Inhibits the integrated stress response (ISR) in the infected cell by blocking dsRNA binding by EIF2AK2/PKR and further phosphorylation of EIF2S1/EIF-2ALPHA. Stress granule formation is thus inhibited, which allows protein synthesis and viral replication.</text>
</comment>
<comment type="subunit">
    <text evidence="1">Homodimer. Interacts with host TRIM25 (via coiled coil); this interaction specifically inhibits TRIM25 multimerization and TRIM25-mediated RIGI CARD ubiquitination. Interacts with human EIF2AK2/PKR, CPSF4, IVNS1ABP and PABPN1.</text>
</comment>
<comment type="subcellular location">
    <subcellularLocation>
        <location evidence="1">Host nucleus</location>
    </subcellularLocation>
    <subcellularLocation>
        <location evidence="1">Host cytoplasm</location>
    </subcellularLocation>
    <text evidence="1">In uninfected, transfected cells, NS1 is localized in the nucleus. Only in virus infected cells, the nuclear export signal is unveiled, presumably by a viral protein, and a fraction of NS1 is exported in the cytoplasm.</text>
</comment>
<comment type="alternative products">
    <event type="alternative splicing"/>
    <isoform>
        <id>P08274-1</id>
        <name>NS1</name>
        <sequence type="displayed"/>
    </isoform>
    <isoform>
        <id>P08275-1</id>
        <name>NEP</name>
        <name>NS2</name>
        <sequence type="external"/>
    </isoform>
</comment>
<comment type="domain">
    <text evidence="1">The dsRNA-binding region is required for suppression of RNA silencing.</text>
</comment>
<comment type="PTM">
    <text evidence="1">Upon interferon induction, ISGylated via host HERC5; this results in the impairment of NS1 interaction with RNA targets due to its inability to form homodimers and to interact with host EIF2AK2/PKR.</text>
</comment>
<comment type="similarity">
    <text evidence="1">Belongs to the influenza A viruses NS1 family.</text>
</comment>
<name>NS1_I24A0</name>
<dbReference type="EMBL" id="M16561">
    <property type="protein sequence ID" value="AAA43504.1"/>
    <property type="molecule type" value="Genomic_RNA"/>
</dbReference>
<dbReference type="SMR" id="P08274"/>
<dbReference type="GO" id="GO:0030430">
    <property type="term" value="C:host cell cytoplasm"/>
    <property type="evidence" value="ECO:0007669"/>
    <property type="project" value="UniProtKB-SubCell"/>
</dbReference>
<dbReference type="GO" id="GO:0042025">
    <property type="term" value="C:host cell nucleus"/>
    <property type="evidence" value="ECO:0007669"/>
    <property type="project" value="UniProtKB-SubCell"/>
</dbReference>
<dbReference type="GO" id="GO:0030291">
    <property type="term" value="F:protein serine/threonine kinase inhibitor activity"/>
    <property type="evidence" value="ECO:0007669"/>
    <property type="project" value="UniProtKB-KW"/>
</dbReference>
<dbReference type="GO" id="GO:0003723">
    <property type="term" value="F:RNA binding"/>
    <property type="evidence" value="ECO:0007669"/>
    <property type="project" value="UniProtKB-KW"/>
</dbReference>
<dbReference type="GO" id="GO:0039540">
    <property type="term" value="P:symbiont-mediated suppression of host cytoplasmic pattern recognition receptor signaling pathway via inhibition of RIG-I activity"/>
    <property type="evidence" value="ECO:0007669"/>
    <property type="project" value="UniProtKB-KW"/>
</dbReference>
<dbReference type="GO" id="GO:0039657">
    <property type="term" value="P:symbiont-mediated suppression of host gene expression"/>
    <property type="evidence" value="ECO:0007669"/>
    <property type="project" value="UniProtKB-KW"/>
</dbReference>
<dbReference type="GO" id="GO:0039524">
    <property type="term" value="P:symbiont-mediated suppression of host mRNA processing"/>
    <property type="evidence" value="ECO:0007669"/>
    <property type="project" value="UniProtKB-KW"/>
</dbReference>
<dbReference type="GO" id="GO:0039580">
    <property type="term" value="P:symbiont-mediated suppression of host PKR/eIFalpha signaling"/>
    <property type="evidence" value="ECO:0007669"/>
    <property type="project" value="UniProtKB-KW"/>
</dbReference>
<dbReference type="GO" id="GO:0039502">
    <property type="term" value="P:symbiont-mediated suppression of host type I interferon-mediated signaling pathway"/>
    <property type="evidence" value="ECO:0007669"/>
    <property type="project" value="UniProtKB-KW"/>
</dbReference>
<dbReference type="FunFam" id="1.10.287.10:FF:000001">
    <property type="entry name" value="Non-structural protein 1"/>
    <property type="match status" value="1"/>
</dbReference>
<dbReference type="FunFam" id="3.30.420.330:FF:000001">
    <property type="entry name" value="Non-structural protein 1"/>
    <property type="match status" value="1"/>
</dbReference>
<dbReference type="Gene3D" id="3.30.420.330">
    <property type="entry name" value="Influenza virus non-structural protein, effector domain"/>
    <property type="match status" value="1"/>
</dbReference>
<dbReference type="Gene3D" id="1.10.287.10">
    <property type="entry name" value="S15/NS1, RNA-binding"/>
    <property type="match status" value="1"/>
</dbReference>
<dbReference type="HAMAP" id="MF_04066">
    <property type="entry name" value="INFV_NS1"/>
    <property type="match status" value="1"/>
</dbReference>
<dbReference type="InterPro" id="IPR004208">
    <property type="entry name" value="NS1"/>
</dbReference>
<dbReference type="InterPro" id="IPR000256">
    <property type="entry name" value="NS1A"/>
</dbReference>
<dbReference type="InterPro" id="IPR038064">
    <property type="entry name" value="NS1A_effect_dom-like_sf"/>
</dbReference>
<dbReference type="InterPro" id="IPR009068">
    <property type="entry name" value="uS15_NS1_RNA-bd_sf"/>
</dbReference>
<dbReference type="Pfam" id="PF00600">
    <property type="entry name" value="Flu_NS1"/>
    <property type="match status" value="1"/>
</dbReference>
<dbReference type="SUPFAM" id="SSF143021">
    <property type="entry name" value="Ns1 effector domain-like"/>
    <property type="match status" value="1"/>
</dbReference>
<dbReference type="SUPFAM" id="SSF47060">
    <property type="entry name" value="S15/NS1 RNA-binding domain"/>
    <property type="match status" value="1"/>
</dbReference>
<proteinExistence type="inferred from homology"/>
<organismHost>
    <name type="scientific">Aves</name>
    <dbReference type="NCBI Taxonomy" id="8782"/>
</organismHost>
<organismHost>
    <name type="scientific">Equus caballus</name>
    <name type="common">Horse</name>
    <dbReference type="NCBI Taxonomy" id="9796"/>
</organismHost>
<organismHost>
    <name type="scientific">Homo sapiens</name>
    <name type="common">Human</name>
    <dbReference type="NCBI Taxonomy" id="9606"/>
</organismHost>
<organismHost>
    <name type="scientific">Phocidae</name>
    <name type="common">true seals</name>
    <dbReference type="NCBI Taxonomy" id="9709"/>
</organismHost>